<sequence>MAAPWTGALLLLLASQAVSSAQALDEEEVPEGWVLLHVVQGQVGAGNYSYLRLNHEGKIVLRMRSLRGDADLYVSDSTLHPSFDEYELQSATCGADAVSIPAHFRRPVGIGVYGHRSHLESAFEMKVYYDATLEPHPFGETAYSDGTDASRKHAYAPEDASQEEESVLWTILISILKLVLEILF</sequence>
<comment type="function">
    <text evidence="1">May be involved in induction of apoptosis in CD4(+) T-cells, but not CD8(+) T-cells or hepatocytes.</text>
</comment>
<comment type="subcellular location">
    <subcellularLocation>
        <location evidence="1">Secreted</location>
    </subcellularLocation>
    <text evidence="1">Secreted by hepatocytes.</text>
</comment>
<comment type="similarity">
    <text evidence="3">Belongs to the UPF0669 family.</text>
</comment>
<proteinExistence type="evidence at transcript level"/>
<keyword id="KW-0053">Apoptosis</keyword>
<keyword id="KW-0325">Glycoprotein</keyword>
<keyword id="KW-1185">Reference proteome</keyword>
<keyword id="KW-0964">Secreted</keyword>
<keyword id="KW-0732">Signal</keyword>
<name>CF120_BOVIN</name>
<reference key="1">
    <citation type="submission" date="2007-02" db="EMBL/GenBank/DDBJ databases">
        <authorList>
            <consortium name="NIH - Mammalian Gene Collection (MGC) project"/>
        </authorList>
    </citation>
    <scope>NUCLEOTIDE SEQUENCE [LARGE SCALE MRNA]</scope>
    <source>
        <strain>Hereford</strain>
        <tissue>Thymus</tissue>
    </source>
</reference>
<dbReference type="EMBL" id="BC133490">
    <property type="protein sequence ID" value="AAI33491.1"/>
    <property type="molecule type" value="mRNA"/>
</dbReference>
<dbReference type="RefSeq" id="NP_001096801.1">
    <property type="nucleotide sequence ID" value="NM_001103331.1"/>
</dbReference>
<dbReference type="FunCoup" id="A2VDZ5">
    <property type="interactions" value="1007"/>
</dbReference>
<dbReference type="STRING" id="9913.ENSBTAP00000042087"/>
<dbReference type="GlyGen" id="A2VDZ5">
    <property type="glycosylation" value="1 site"/>
</dbReference>
<dbReference type="PaxDb" id="9913-ENSBTAP00000042087"/>
<dbReference type="GeneID" id="100125289"/>
<dbReference type="KEGG" id="bta:100125289"/>
<dbReference type="CTD" id="100125289"/>
<dbReference type="eggNOG" id="ENOG502RXJP">
    <property type="taxonomic scope" value="Eukaryota"/>
</dbReference>
<dbReference type="InParanoid" id="A2VDZ5"/>
<dbReference type="OrthoDB" id="10046613at2759"/>
<dbReference type="Proteomes" id="UP000009136">
    <property type="component" value="Unplaced"/>
</dbReference>
<dbReference type="GO" id="GO:0005576">
    <property type="term" value="C:extracellular region"/>
    <property type="evidence" value="ECO:0007669"/>
    <property type="project" value="UniProtKB-SubCell"/>
</dbReference>
<dbReference type="GO" id="GO:0006915">
    <property type="term" value="P:apoptotic process"/>
    <property type="evidence" value="ECO:0007669"/>
    <property type="project" value="UniProtKB-KW"/>
</dbReference>
<dbReference type="InterPro" id="IPR031420">
    <property type="entry name" value="UPF0669"/>
</dbReference>
<dbReference type="PANTHER" id="PTHR31703">
    <property type="entry name" value="UPF0669 PROTEIN C6ORF120"/>
    <property type="match status" value="1"/>
</dbReference>
<dbReference type="PANTHER" id="PTHR31703:SF2">
    <property type="entry name" value="UPF0669 PROTEIN C6ORF120"/>
    <property type="match status" value="1"/>
</dbReference>
<dbReference type="Pfam" id="PF17065">
    <property type="entry name" value="UPF0669"/>
    <property type="match status" value="1"/>
</dbReference>
<accession>A2VDZ5</accession>
<evidence type="ECO:0000250" key="1"/>
<evidence type="ECO:0000255" key="2"/>
<evidence type="ECO:0000305" key="3"/>
<organism>
    <name type="scientific">Bos taurus</name>
    <name type="common">Bovine</name>
    <dbReference type="NCBI Taxonomy" id="9913"/>
    <lineage>
        <taxon>Eukaryota</taxon>
        <taxon>Metazoa</taxon>
        <taxon>Chordata</taxon>
        <taxon>Craniata</taxon>
        <taxon>Vertebrata</taxon>
        <taxon>Euteleostomi</taxon>
        <taxon>Mammalia</taxon>
        <taxon>Eutheria</taxon>
        <taxon>Laurasiatheria</taxon>
        <taxon>Artiodactyla</taxon>
        <taxon>Ruminantia</taxon>
        <taxon>Pecora</taxon>
        <taxon>Bovidae</taxon>
        <taxon>Bovinae</taxon>
        <taxon>Bos</taxon>
    </lineage>
</organism>
<protein>
    <recommendedName>
        <fullName>UPF0669 protein C6orf120 homolog</fullName>
    </recommendedName>
</protein>
<feature type="signal peptide" evidence="2">
    <location>
        <begin position="1"/>
        <end position="23"/>
    </location>
</feature>
<feature type="chain" id="PRO_0000297661" description="UPF0669 protein C6orf120 homolog">
    <location>
        <begin position="24"/>
        <end position="184"/>
    </location>
</feature>
<feature type="glycosylation site" description="N-linked (GlcNAc...) asparagine" evidence="2">
    <location>
        <position position="47"/>
    </location>
</feature>